<sequence>MPSLDELTISTIRGLSVDAVSAANSGHPGAPLGLAPAAHVVWQKMKFNPKDPNWINRDRFVLSNGHACALLYSLLVLYKFELTVDDLKQFRQLGFKTPGHPEATDTAGVEVTTGPLGQGISNAVGIAIAQKQFAATYNKPDITLSDSYVYTFVGDGCLMEGVSSETSSLAGHLQLNNLIAFWDDNRISIDGDTAVSFTENVPDRYRAYGWNVLEVPDANTNIEAIAAAVDEAKKSTDKPTLIRLVTTIGYGSLKQGSHDVHGSPLKPDDIKQLKKSWGFKEDVDFFIPEEVSEYLAKHVSENQKVQKEWEAKLAEYKKKYPTEGAEIQRRLDGKLPEGWKEYLPKYTPADKPLATRKLSENVINALHGKIPEFIGGSADLTGSNLTRAEGSVDFQPPSTGLGNYDGVYIRYGVREHGMGAIMNGIAAFGANYKNYGGTFLNFVSYAAGALRLSALSHHPVIWVATHDSIGLGEDGPTHQPIETLAHFRAIPNLSVWRPADGNEVSAAYAAAIESTSHPSVIALTRQNLPQLEGSSIENALKGGYTLVKKDNPDVIIVSSGSEVSISVAASEELAKQGVKANVVSLPDFFTFDQQSDEYRLSVLPDGVPILSVEVMSTFGWSKYSHEQFGLNRFGASGKAADLYKYFEFTPEGIAERAQKTIKYYEGKQLLSPLDRAF</sequence>
<organism>
    <name type="scientific">Candida albicans</name>
    <name type="common">Yeast</name>
    <dbReference type="NCBI Taxonomy" id="5476"/>
    <lineage>
        <taxon>Eukaryota</taxon>
        <taxon>Fungi</taxon>
        <taxon>Dikarya</taxon>
        <taxon>Ascomycota</taxon>
        <taxon>Saccharomycotina</taxon>
        <taxon>Pichiomycetes</taxon>
        <taxon>Debaryomycetaceae</taxon>
        <taxon>Candida/Lodderomyces clade</taxon>
        <taxon>Candida</taxon>
    </lineage>
</organism>
<comment type="function">
    <text evidence="1">Catalyzes the transfer of a two-carbon ketol group from a ketose donor to an aldose acceptor, via a covalent intermediate with the cofactor thiamine pyrophosphate.</text>
</comment>
<comment type="catalytic activity">
    <reaction>
        <text>D-sedoheptulose 7-phosphate + D-glyceraldehyde 3-phosphate = aldehydo-D-ribose 5-phosphate + D-xylulose 5-phosphate</text>
        <dbReference type="Rhea" id="RHEA:10508"/>
        <dbReference type="ChEBI" id="CHEBI:57483"/>
        <dbReference type="ChEBI" id="CHEBI:57737"/>
        <dbReference type="ChEBI" id="CHEBI:58273"/>
        <dbReference type="ChEBI" id="CHEBI:59776"/>
        <dbReference type="EC" id="2.2.1.1"/>
    </reaction>
</comment>
<comment type="cofactor">
    <cofactor evidence="1">
        <name>Mg(2+)</name>
        <dbReference type="ChEBI" id="CHEBI:18420"/>
    </cofactor>
    <cofactor evidence="1">
        <name>Ca(2+)</name>
        <dbReference type="ChEBI" id="CHEBI:29108"/>
    </cofactor>
    <cofactor evidence="1">
        <name>Mn(2+)</name>
        <dbReference type="ChEBI" id="CHEBI:29035"/>
    </cofactor>
    <cofactor evidence="1">
        <name>Co(2+)</name>
        <dbReference type="ChEBI" id="CHEBI:48828"/>
    </cofactor>
    <text evidence="1">Binds 1 Mg(2+) ion per subunit. Can also utilize other divalent metal cations, such as Ca(2+), Mn(2+) and Co(2+).</text>
</comment>
<comment type="cofactor">
    <cofactor evidence="1">
        <name>thiamine diphosphate</name>
        <dbReference type="ChEBI" id="CHEBI:58937"/>
    </cofactor>
    <text evidence="1">Binds 1 thiamine pyrophosphate per subunit.</text>
</comment>
<comment type="subunit">
    <text evidence="1">Homodimer.</text>
</comment>
<comment type="similarity">
    <text evidence="2">Belongs to the transketolase family.</text>
</comment>
<accession>O94039</accession>
<dbReference type="EC" id="2.2.1.1"/>
<dbReference type="EMBL" id="AL033501">
    <property type="protein sequence ID" value="CAA21989.1"/>
    <property type="molecule type" value="Genomic_DNA"/>
</dbReference>
<dbReference type="PIR" id="T18231">
    <property type="entry name" value="T18231"/>
</dbReference>
<dbReference type="SMR" id="O94039"/>
<dbReference type="VEuPathDB" id="FungiDB:C1_08320W_A"/>
<dbReference type="VEuPathDB" id="FungiDB:CAWG_00593"/>
<dbReference type="GO" id="GO:0005829">
    <property type="term" value="C:cytosol"/>
    <property type="evidence" value="ECO:0007669"/>
    <property type="project" value="TreeGrafter"/>
</dbReference>
<dbReference type="GO" id="GO:0005634">
    <property type="term" value="C:nucleus"/>
    <property type="evidence" value="ECO:0007669"/>
    <property type="project" value="TreeGrafter"/>
</dbReference>
<dbReference type="GO" id="GO:0046872">
    <property type="term" value="F:metal ion binding"/>
    <property type="evidence" value="ECO:0007669"/>
    <property type="project" value="UniProtKB-KW"/>
</dbReference>
<dbReference type="GO" id="GO:0004802">
    <property type="term" value="F:transketolase activity"/>
    <property type="evidence" value="ECO:0007669"/>
    <property type="project" value="UniProtKB-EC"/>
</dbReference>
<dbReference type="GO" id="GO:0006098">
    <property type="term" value="P:pentose-phosphate shunt"/>
    <property type="evidence" value="ECO:0007669"/>
    <property type="project" value="TreeGrafter"/>
</dbReference>
<dbReference type="CDD" id="cd07033">
    <property type="entry name" value="TPP_PYR_DXS_TK_like"/>
    <property type="match status" value="1"/>
</dbReference>
<dbReference type="CDD" id="cd02012">
    <property type="entry name" value="TPP_TK"/>
    <property type="match status" value="1"/>
</dbReference>
<dbReference type="FunFam" id="3.40.50.920:FF:000003">
    <property type="entry name" value="Transketolase"/>
    <property type="match status" value="1"/>
</dbReference>
<dbReference type="FunFam" id="3.40.50.970:FF:000003">
    <property type="entry name" value="Transketolase"/>
    <property type="match status" value="1"/>
</dbReference>
<dbReference type="FunFam" id="3.40.50.970:FF:000004">
    <property type="entry name" value="Transketolase"/>
    <property type="match status" value="1"/>
</dbReference>
<dbReference type="Gene3D" id="3.40.50.920">
    <property type="match status" value="1"/>
</dbReference>
<dbReference type="Gene3D" id="3.40.50.970">
    <property type="match status" value="2"/>
</dbReference>
<dbReference type="InterPro" id="IPR029061">
    <property type="entry name" value="THDP-binding"/>
</dbReference>
<dbReference type="InterPro" id="IPR009014">
    <property type="entry name" value="Transketo_C/PFOR_II"/>
</dbReference>
<dbReference type="InterPro" id="IPR055152">
    <property type="entry name" value="Transketolase-like_C_2"/>
</dbReference>
<dbReference type="InterPro" id="IPR005475">
    <property type="entry name" value="Transketolase-like_Pyr-bd"/>
</dbReference>
<dbReference type="InterPro" id="IPR005478">
    <property type="entry name" value="Transketolase_bac-like"/>
</dbReference>
<dbReference type="InterPro" id="IPR020826">
    <property type="entry name" value="Transketolase_BS"/>
</dbReference>
<dbReference type="InterPro" id="IPR049557">
    <property type="entry name" value="Transketolase_CS"/>
</dbReference>
<dbReference type="InterPro" id="IPR033247">
    <property type="entry name" value="Transketolase_fam"/>
</dbReference>
<dbReference type="InterPro" id="IPR005474">
    <property type="entry name" value="Transketolase_N"/>
</dbReference>
<dbReference type="NCBIfam" id="TIGR00232">
    <property type="entry name" value="tktlase_bact"/>
    <property type="match status" value="1"/>
</dbReference>
<dbReference type="PANTHER" id="PTHR43522">
    <property type="entry name" value="TRANSKETOLASE"/>
    <property type="match status" value="1"/>
</dbReference>
<dbReference type="PANTHER" id="PTHR43522:SF2">
    <property type="entry name" value="TRANSKETOLASE 1-RELATED"/>
    <property type="match status" value="1"/>
</dbReference>
<dbReference type="Pfam" id="PF02779">
    <property type="entry name" value="Transket_pyr"/>
    <property type="match status" value="1"/>
</dbReference>
<dbReference type="Pfam" id="PF22613">
    <property type="entry name" value="Transketolase_C_1"/>
    <property type="match status" value="1"/>
</dbReference>
<dbReference type="Pfam" id="PF00456">
    <property type="entry name" value="Transketolase_N"/>
    <property type="match status" value="1"/>
</dbReference>
<dbReference type="SMART" id="SM00861">
    <property type="entry name" value="Transket_pyr"/>
    <property type="match status" value="1"/>
</dbReference>
<dbReference type="SUPFAM" id="SSF52518">
    <property type="entry name" value="Thiamin diphosphate-binding fold (THDP-binding)"/>
    <property type="match status" value="2"/>
</dbReference>
<dbReference type="SUPFAM" id="SSF52922">
    <property type="entry name" value="TK C-terminal domain-like"/>
    <property type="match status" value="1"/>
</dbReference>
<dbReference type="PROSITE" id="PS00801">
    <property type="entry name" value="TRANSKETOLASE_1"/>
    <property type="match status" value="1"/>
</dbReference>
<dbReference type="PROSITE" id="PS00802">
    <property type="entry name" value="TRANSKETOLASE_2"/>
    <property type="match status" value="1"/>
</dbReference>
<reference key="1">
    <citation type="submission" date="1998-11" db="EMBL/GenBank/DDBJ databases">
        <title>Candida albicans strain 1161 genome pilot sequencing project.</title>
        <authorList>
            <person name="Taylor K."/>
            <person name="Harris D."/>
            <person name="Barrell B.G."/>
            <person name="Rajandream M.A."/>
        </authorList>
    </citation>
    <scope>NUCLEOTIDE SEQUENCE [LARGE SCALE GENOMIC DNA]</scope>
    <source>
        <strain>1161</strain>
    </source>
</reference>
<name>TKT1_CANAX</name>
<protein>
    <recommendedName>
        <fullName>Transketolase 1</fullName>
        <shortName>TK 1</shortName>
        <ecNumber>2.2.1.1</ecNumber>
    </recommendedName>
</protein>
<gene>
    <name type="primary">TKT1</name>
    <name type="ORF">Ca41C10.05c</name>
</gene>
<keyword id="KW-0106">Calcium</keyword>
<keyword id="KW-0460">Magnesium</keyword>
<keyword id="KW-0479">Metal-binding</keyword>
<keyword id="KW-0786">Thiamine pyrophosphate</keyword>
<keyword id="KW-0808">Transferase</keyword>
<evidence type="ECO:0000250" key="1"/>
<evidence type="ECO:0000305" key="2"/>
<feature type="chain" id="PRO_0000191900" description="Transketolase 1">
    <location>
        <begin position="1"/>
        <end position="677"/>
    </location>
</feature>
<feature type="active site" description="Proton donor" evidence="1">
    <location>
        <position position="415"/>
    </location>
</feature>
<feature type="binding site" evidence="1">
    <location>
        <position position="27"/>
    </location>
    <ligand>
        <name>substrate</name>
    </ligand>
</feature>
<feature type="binding site" evidence="1">
    <location>
        <position position="66"/>
    </location>
    <ligand>
        <name>thiamine diphosphate</name>
        <dbReference type="ChEBI" id="CHEBI:58937"/>
    </ligand>
</feature>
<feature type="binding site" evidence="1">
    <location>
        <begin position="114"/>
        <end position="116"/>
    </location>
    <ligand>
        <name>thiamine diphosphate</name>
        <dbReference type="ChEBI" id="CHEBI:58937"/>
    </ligand>
</feature>
<feature type="binding site" evidence="1">
    <location>
        <position position="155"/>
    </location>
    <ligand>
        <name>Mg(2+)</name>
        <dbReference type="ChEBI" id="CHEBI:18420"/>
    </ligand>
</feature>
<feature type="binding site" evidence="1">
    <location>
        <position position="156"/>
    </location>
    <ligand>
        <name>thiamine diphosphate</name>
        <dbReference type="ChEBI" id="CHEBI:58937"/>
    </ligand>
</feature>
<feature type="binding site" evidence="1">
    <location>
        <position position="185"/>
    </location>
    <ligand>
        <name>Mg(2+)</name>
        <dbReference type="ChEBI" id="CHEBI:18420"/>
    </ligand>
</feature>
<feature type="binding site" evidence="1">
    <location>
        <position position="185"/>
    </location>
    <ligand>
        <name>thiamine diphosphate</name>
        <dbReference type="ChEBI" id="CHEBI:58937"/>
    </ligand>
</feature>
<feature type="binding site" evidence="1">
    <location>
        <position position="187"/>
    </location>
    <ligand>
        <name>Mg(2+)</name>
        <dbReference type="ChEBI" id="CHEBI:18420"/>
    </ligand>
</feature>
<feature type="binding site" evidence="1">
    <location>
        <position position="261"/>
    </location>
    <ligand>
        <name>substrate</name>
    </ligand>
</feature>
<feature type="binding site" evidence="1">
    <location>
        <position position="261"/>
    </location>
    <ligand>
        <name>thiamine diphosphate</name>
        <dbReference type="ChEBI" id="CHEBI:58937"/>
    </ligand>
</feature>
<feature type="binding site" evidence="1">
    <location>
        <position position="356"/>
    </location>
    <ligand>
        <name>substrate</name>
    </ligand>
</feature>
<feature type="binding site" evidence="1">
    <location>
        <position position="383"/>
    </location>
    <ligand>
        <name>substrate</name>
    </ligand>
</feature>
<feature type="binding site" evidence="1">
    <location>
        <position position="415"/>
    </location>
    <ligand>
        <name>thiamine diphosphate</name>
        <dbReference type="ChEBI" id="CHEBI:58937"/>
    </ligand>
</feature>
<feature type="binding site" evidence="1">
    <location>
        <position position="442"/>
    </location>
    <ligand>
        <name>thiamine diphosphate</name>
        <dbReference type="ChEBI" id="CHEBI:58937"/>
    </ligand>
</feature>
<feature type="binding site" evidence="1">
    <location>
        <position position="466"/>
    </location>
    <ligand>
        <name>substrate</name>
    </ligand>
</feature>
<feature type="binding site" evidence="1">
    <location>
        <position position="474"/>
    </location>
    <ligand>
        <name>substrate</name>
    </ligand>
</feature>
<feature type="binding site" evidence="1">
    <location>
        <position position="525"/>
    </location>
    <ligand>
        <name>substrate</name>
    </ligand>
</feature>
<feature type="site" description="Important for catalytic activity" evidence="1">
    <location>
        <position position="27"/>
    </location>
</feature>
<feature type="site" description="Important for catalytic activity" evidence="1">
    <location>
        <position position="261"/>
    </location>
</feature>
<proteinExistence type="inferred from homology"/>